<proteinExistence type="inferred from homology"/>
<evidence type="ECO:0000255" key="1">
    <source>
        <dbReference type="HAMAP-Rule" id="MF_00715"/>
    </source>
</evidence>
<evidence type="ECO:0000256" key="2">
    <source>
        <dbReference type="SAM" id="MobiDB-lite"/>
    </source>
</evidence>
<reference key="1">
    <citation type="submission" date="2008-05" db="EMBL/GenBank/DDBJ databases">
        <title>Complete sequence of Shigella boydii serotype 18 strain BS512.</title>
        <authorList>
            <person name="Rasko D.A."/>
            <person name="Rosovitz M."/>
            <person name="Maurelli A.T."/>
            <person name="Myers G."/>
            <person name="Seshadri R."/>
            <person name="Cer R."/>
            <person name="Jiang L."/>
            <person name="Ravel J."/>
            <person name="Sebastian Y."/>
        </authorList>
    </citation>
    <scope>NUCLEOTIDE SEQUENCE [LARGE SCALE GENOMIC DNA]</scope>
    <source>
        <strain>CDC 3083-94 / BS512</strain>
    </source>
</reference>
<sequence>MQDLSLEARLAELESRLAFQEITIEELNVTVTAHEMEMAKLRDHLRLLTEKLKASQPSNIASQAEETPPPHY</sequence>
<comment type="similarity">
    <text evidence="1">Belongs to the SlyX family.</text>
</comment>
<organism>
    <name type="scientific">Shigella boydii serotype 18 (strain CDC 3083-94 / BS512)</name>
    <dbReference type="NCBI Taxonomy" id="344609"/>
    <lineage>
        <taxon>Bacteria</taxon>
        <taxon>Pseudomonadati</taxon>
        <taxon>Pseudomonadota</taxon>
        <taxon>Gammaproteobacteria</taxon>
        <taxon>Enterobacterales</taxon>
        <taxon>Enterobacteriaceae</taxon>
        <taxon>Shigella</taxon>
    </lineage>
</organism>
<gene>
    <name evidence="1" type="primary">slyX</name>
    <name type="ordered locus">SbBS512_E3722</name>
</gene>
<feature type="chain" id="PRO_1000195858" description="Protein SlyX">
    <location>
        <begin position="1"/>
        <end position="72"/>
    </location>
</feature>
<feature type="region of interest" description="Disordered" evidence="2">
    <location>
        <begin position="52"/>
        <end position="72"/>
    </location>
</feature>
<feature type="compositionally biased region" description="Polar residues" evidence="2">
    <location>
        <begin position="55"/>
        <end position="65"/>
    </location>
</feature>
<name>SLYX_SHIB3</name>
<dbReference type="EMBL" id="CP001063">
    <property type="protein sequence ID" value="ACD08709.1"/>
    <property type="molecule type" value="Genomic_DNA"/>
</dbReference>
<dbReference type="RefSeq" id="WP_001153615.1">
    <property type="nucleotide sequence ID" value="NC_010658.1"/>
</dbReference>
<dbReference type="SMR" id="B2U2V5"/>
<dbReference type="STRING" id="344609.SbBS512_E3722"/>
<dbReference type="KEGG" id="sbc:SbBS512_E3722"/>
<dbReference type="HOGENOM" id="CLU_180796_4_2_6"/>
<dbReference type="Proteomes" id="UP000001030">
    <property type="component" value="Chromosome"/>
</dbReference>
<dbReference type="Gene3D" id="1.20.5.300">
    <property type="match status" value="1"/>
</dbReference>
<dbReference type="HAMAP" id="MF_00715">
    <property type="entry name" value="SlyX"/>
    <property type="match status" value="1"/>
</dbReference>
<dbReference type="InterPro" id="IPR007236">
    <property type="entry name" value="SlyX"/>
</dbReference>
<dbReference type="NCBIfam" id="NF002750">
    <property type="entry name" value="PRK02793.1"/>
    <property type="match status" value="1"/>
</dbReference>
<dbReference type="PANTHER" id="PTHR36508">
    <property type="entry name" value="PROTEIN SLYX"/>
    <property type="match status" value="1"/>
</dbReference>
<dbReference type="PANTHER" id="PTHR36508:SF1">
    <property type="entry name" value="PROTEIN SLYX"/>
    <property type="match status" value="1"/>
</dbReference>
<dbReference type="Pfam" id="PF04102">
    <property type="entry name" value="SlyX"/>
    <property type="match status" value="1"/>
</dbReference>
<protein>
    <recommendedName>
        <fullName evidence="1">Protein SlyX</fullName>
    </recommendedName>
</protein>
<keyword id="KW-1185">Reference proteome</keyword>
<accession>B2U2V5</accession>